<gene>
    <name evidence="1" type="primary">nqrB</name>
    <name type="ordered locus">CTA_0300</name>
</gene>
<dbReference type="EC" id="7.2.1.1" evidence="1"/>
<dbReference type="EMBL" id="CP000051">
    <property type="protein sequence ID" value="AAX50538.1"/>
    <property type="molecule type" value="Genomic_DNA"/>
</dbReference>
<dbReference type="RefSeq" id="WP_009871625.1">
    <property type="nucleotide sequence ID" value="NC_007429.1"/>
</dbReference>
<dbReference type="SMR" id="Q3KM84"/>
<dbReference type="KEGG" id="cta:CTA_0300"/>
<dbReference type="HOGENOM" id="CLU_042020_1_1_0"/>
<dbReference type="Proteomes" id="UP000002532">
    <property type="component" value="Chromosome"/>
</dbReference>
<dbReference type="GO" id="GO:0005886">
    <property type="term" value="C:plasma membrane"/>
    <property type="evidence" value="ECO:0007669"/>
    <property type="project" value="UniProtKB-SubCell"/>
</dbReference>
<dbReference type="GO" id="GO:0010181">
    <property type="term" value="F:FMN binding"/>
    <property type="evidence" value="ECO:0007669"/>
    <property type="project" value="InterPro"/>
</dbReference>
<dbReference type="GO" id="GO:0016655">
    <property type="term" value="F:oxidoreductase activity, acting on NAD(P)H, quinone or similar compound as acceptor"/>
    <property type="evidence" value="ECO:0007669"/>
    <property type="project" value="UniProtKB-UniRule"/>
</dbReference>
<dbReference type="GO" id="GO:0022904">
    <property type="term" value="P:respiratory electron transport chain"/>
    <property type="evidence" value="ECO:0007669"/>
    <property type="project" value="InterPro"/>
</dbReference>
<dbReference type="GO" id="GO:0006814">
    <property type="term" value="P:sodium ion transport"/>
    <property type="evidence" value="ECO:0007669"/>
    <property type="project" value="UniProtKB-UniRule"/>
</dbReference>
<dbReference type="GO" id="GO:0055085">
    <property type="term" value="P:transmembrane transport"/>
    <property type="evidence" value="ECO:0007669"/>
    <property type="project" value="InterPro"/>
</dbReference>
<dbReference type="HAMAP" id="MF_00426">
    <property type="entry name" value="NqrB"/>
    <property type="match status" value="1"/>
</dbReference>
<dbReference type="InterPro" id="IPR010966">
    <property type="entry name" value="NqrB"/>
</dbReference>
<dbReference type="InterPro" id="IPR004338">
    <property type="entry name" value="NqrB/RnfD"/>
</dbReference>
<dbReference type="NCBIfam" id="TIGR01937">
    <property type="entry name" value="nqrB"/>
    <property type="match status" value="1"/>
</dbReference>
<dbReference type="NCBIfam" id="NF002181">
    <property type="entry name" value="PRK01024.1"/>
    <property type="match status" value="1"/>
</dbReference>
<dbReference type="PANTHER" id="PTHR30578">
    <property type="entry name" value="ELECTRON TRANSPORT COMPLEX PROTEIN RNFD"/>
    <property type="match status" value="1"/>
</dbReference>
<dbReference type="PANTHER" id="PTHR30578:SF1">
    <property type="entry name" value="NA(+)-TRANSLOCATING NADH-QUINONE REDUCTASE SUBUNIT B"/>
    <property type="match status" value="1"/>
</dbReference>
<dbReference type="Pfam" id="PF03116">
    <property type="entry name" value="NQR2_RnfD_RnfE"/>
    <property type="match status" value="1"/>
</dbReference>
<evidence type="ECO:0000255" key="1">
    <source>
        <dbReference type="HAMAP-Rule" id="MF_00426"/>
    </source>
</evidence>
<reference key="1">
    <citation type="journal article" date="2005" name="Infect. Immun.">
        <title>Comparative genomic analysis of Chlamydia trachomatis oculotropic and genitotropic strains.</title>
        <authorList>
            <person name="Carlson J.H."/>
            <person name="Porcella S.F."/>
            <person name="McClarty G."/>
            <person name="Caldwell H.D."/>
        </authorList>
    </citation>
    <scope>NUCLEOTIDE SEQUENCE [LARGE SCALE GENOMIC DNA]</scope>
    <source>
        <strain>ATCC VR-571B / DSM 19440 / HAR-13</strain>
    </source>
</reference>
<feature type="chain" id="PRO_1000060136" description="Na(+)-translocating NADH-quinone reductase subunit B">
    <location>
        <begin position="1"/>
        <end position="503"/>
    </location>
</feature>
<feature type="transmembrane region" description="Helical" evidence="1">
    <location>
        <begin position="55"/>
        <end position="75"/>
    </location>
</feature>
<feature type="transmembrane region" description="Helical" evidence="1">
    <location>
        <begin position="120"/>
        <end position="142"/>
    </location>
</feature>
<feature type="transmembrane region" description="Helical" evidence="1">
    <location>
        <begin position="160"/>
        <end position="180"/>
    </location>
</feature>
<feature type="transmembrane region" description="Helical" evidence="1">
    <location>
        <begin position="361"/>
        <end position="381"/>
    </location>
</feature>
<feature type="transmembrane region" description="Helical" evidence="1">
    <location>
        <begin position="384"/>
        <end position="404"/>
    </location>
</feature>
<feature type="transmembrane region" description="Helical" evidence="1">
    <location>
        <begin position="417"/>
        <end position="437"/>
    </location>
</feature>
<feature type="transmembrane region" description="Helical" evidence="1">
    <location>
        <begin position="452"/>
        <end position="472"/>
    </location>
</feature>
<feature type="transmembrane region" description="Helical" evidence="1">
    <location>
        <begin position="475"/>
        <end position="495"/>
    </location>
</feature>
<feature type="modified residue" description="FMN phosphoryl threonine" evidence="1">
    <location>
        <position position="248"/>
    </location>
</feature>
<protein>
    <recommendedName>
        <fullName evidence="1">Na(+)-translocating NADH-quinone reductase subunit B</fullName>
        <shortName evidence="1">Na(+)-NQR subunit B</shortName>
        <shortName evidence="1">Na(+)-translocating NQR subunit B</shortName>
        <ecNumber evidence="1">7.2.1.1</ecNumber>
    </recommendedName>
    <alternativeName>
        <fullName evidence="1">NQR complex subunit B</fullName>
    </alternativeName>
    <alternativeName>
        <fullName evidence="1">NQR-1 subunit B</fullName>
    </alternativeName>
</protein>
<sequence>MLEKLVDSLWKICRKSKFQHMTPIADAVDTFCFEPLHTPSSPPFVRDAVDVKRWMMLVVIALMPTIFAAVWNSGLQALVYQSSDPRIMEAFLHISGFKSYFSFVSQEIGIGSVLFAGCKIFLPLLFISYAVGGTCEVLFAIIRKHKIAEGLLVTGMLYPLILPPTIPYWMAALGIAFGVVMGKELFGGTGMNILNPALTGRAFLFFTFPAKMSGDVWVGSNPSRIKESLATMSSLAEKSHFDGFSQSTCLQVLNSTPPSVKRVHIDAIASNILNLEHVPTQDVLQTQFATWAESYPGLTVDQLSLEQLQNFVTTPITEGGLGLLPAHFDSACSLTEAVYGIGKFSTGNLFFGNILGSLGETSTVACLLGAGLLLLTGIASWRTMLSFGLSAFFFAWFFKIMSILTTGNAGAWAPAKFFIPAYRHLCIGGLAFGLVFMATDPVSSPAMKLAKWLYGAFIGFLTILIRLINPAYPEGVMLAILLGNVFAPLFDNIALKQYRQRRI</sequence>
<name>NQRB_CHLTA</name>
<comment type="function">
    <text evidence="1">NQR complex catalyzes the reduction of ubiquinone-1 to ubiquinol by two successive reactions, coupled with the transport of Na(+) ions from the cytoplasm to the periplasm. NqrA to NqrE are probably involved in the second step, the conversion of ubisemiquinone to ubiquinol.</text>
</comment>
<comment type="catalytic activity">
    <reaction evidence="1">
        <text>a ubiquinone + n Na(+)(in) + NADH + H(+) = a ubiquinol + n Na(+)(out) + NAD(+)</text>
        <dbReference type="Rhea" id="RHEA:47748"/>
        <dbReference type="Rhea" id="RHEA-COMP:9565"/>
        <dbReference type="Rhea" id="RHEA-COMP:9566"/>
        <dbReference type="ChEBI" id="CHEBI:15378"/>
        <dbReference type="ChEBI" id="CHEBI:16389"/>
        <dbReference type="ChEBI" id="CHEBI:17976"/>
        <dbReference type="ChEBI" id="CHEBI:29101"/>
        <dbReference type="ChEBI" id="CHEBI:57540"/>
        <dbReference type="ChEBI" id="CHEBI:57945"/>
        <dbReference type="EC" id="7.2.1.1"/>
    </reaction>
</comment>
<comment type="cofactor">
    <cofactor evidence="1">
        <name>FMN</name>
        <dbReference type="ChEBI" id="CHEBI:58210"/>
    </cofactor>
</comment>
<comment type="subunit">
    <text evidence="1">Composed of six subunits; NqrA, NqrB, NqrC, NqrD, NqrE and NqrF.</text>
</comment>
<comment type="subcellular location">
    <subcellularLocation>
        <location evidence="1">Cell inner membrane</location>
        <topology evidence="1">Multi-pass membrane protein</topology>
    </subcellularLocation>
</comment>
<comment type="similarity">
    <text evidence="1">Belongs to the NqrB/RnfD family.</text>
</comment>
<keyword id="KW-0997">Cell inner membrane</keyword>
<keyword id="KW-1003">Cell membrane</keyword>
<keyword id="KW-0285">Flavoprotein</keyword>
<keyword id="KW-0288">FMN</keyword>
<keyword id="KW-0406">Ion transport</keyword>
<keyword id="KW-0472">Membrane</keyword>
<keyword id="KW-0520">NAD</keyword>
<keyword id="KW-0597">Phosphoprotein</keyword>
<keyword id="KW-0915">Sodium</keyword>
<keyword id="KW-0739">Sodium transport</keyword>
<keyword id="KW-1278">Translocase</keyword>
<keyword id="KW-0812">Transmembrane</keyword>
<keyword id="KW-1133">Transmembrane helix</keyword>
<keyword id="KW-0813">Transport</keyword>
<keyword id="KW-0830">Ubiquinone</keyword>
<organism>
    <name type="scientific">Chlamydia trachomatis serovar A (strain ATCC VR-571B / DSM 19440 / HAR-13)</name>
    <dbReference type="NCBI Taxonomy" id="315277"/>
    <lineage>
        <taxon>Bacteria</taxon>
        <taxon>Pseudomonadati</taxon>
        <taxon>Chlamydiota</taxon>
        <taxon>Chlamydiia</taxon>
        <taxon>Chlamydiales</taxon>
        <taxon>Chlamydiaceae</taxon>
        <taxon>Chlamydia/Chlamydophila group</taxon>
        <taxon>Chlamydia</taxon>
    </lineage>
</organism>
<accession>Q3KM84</accession>
<proteinExistence type="inferred from homology"/>